<accession>P0C7M0</accession>
<accession>O34259</accession>
<comment type="function">
    <text evidence="1">Involved in the TonB-dependent energy-dependent transport of various receptor-bound substrates.</text>
</comment>
<comment type="subunit">
    <text evidence="1">The accessory proteins ExbB and ExbD seem to form a complex with TonB.</text>
</comment>
<comment type="subcellular location">
    <subcellularLocation>
        <location evidence="3">Cell inner membrane</location>
        <topology evidence="3">Single-pass type II membrane protein</topology>
    </subcellularLocation>
</comment>
<comment type="similarity">
    <text evidence="3">Belongs to the ExbD/TolR family.</text>
</comment>
<feature type="chain" id="PRO_0000129134" description="Biopolymer transport protein exbD1">
    <location>
        <begin position="1"/>
        <end position="140"/>
    </location>
</feature>
<feature type="topological domain" description="Cytoplasmic" evidence="2">
    <location>
        <begin position="1"/>
        <end position="16"/>
    </location>
</feature>
<feature type="transmembrane region" description="Helical" evidence="2">
    <location>
        <begin position="17"/>
        <end position="37"/>
    </location>
</feature>
<feature type="topological domain" description="Periplasmic" evidence="2">
    <location>
        <begin position="38"/>
        <end position="140"/>
    </location>
</feature>
<name>EXBD1_XANCP</name>
<gene>
    <name type="primary">exbD1</name>
    <name type="ordered locus">XCC0010</name>
</gene>
<sequence length="140" mass="15215">MAFSSGNSGGPMADINVTPLVDVMLVLLIIFIITAPLMSHKVKVELPEANLIQKEDAEKRAAPITLAVKEDGSLYWNDEPISKEALESRLSTAAQQTPQPPLNLRGDRTTKMRTINEITKIAQGQGMLDVGFVATKEKGQ</sequence>
<reference key="1">
    <citation type="journal article" date="2002" name="Nature">
        <title>Comparison of the genomes of two Xanthomonas pathogens with differing host specificities.</title>
        <authorList>
            <person name="da Silva A.C.R."/>
            <person name="Ferro J.A."/>
            <person name="Reinach F.C."/>
            <person name="Farah C.S."/>
            <person name="Furlan L.R."/>
            <person name="Quaggio R.B."/>
            <person name="Monteiro-Vitorello C.B."/>
            <person name="Van Sluys M.A."/>
            <person name="Almeida N.F. Jr."/>
            <person name="Alves L.M.C."/>
            <person name="do Amaral A.M."/>
            <person name="Bertolini M.C."/>
            <person name="Camargo L.E.A."/>
            <person name="Camarotte G."/>
            <person name="Cannavan F."/>
            <person name="Cardozo J."/>
            <person name="Chambergo F."/>
            <person name="Ciapina L.P."/>
            <person name="Cicarelli R.M.B."/>
            <person name="Coutinho L.L."/>
            <person name="Cursino-Santos J.R."/>
            <person name="El-Dorry H."/>
            <person name="Faria J.B."/>
            <person name="Ferreira A.J.S."/>
            <person name="Ferreira R.C.C."/>
            <person name="Ferro M.I.T."/>
            <person name="Formighieri E.F."/>
            <person name="Franco M.C."/>
            <person name="Greggio C.C."/>
            <person name="Gruber A."/>
            <person name="Katsuyama A.M."/>
            <person name="Kishi L.T."/>
            <person name="Leite R.P."/>
            <person name="Lemos E.G.M."/>
            <person name="Lemos M.V.F."/>
            <person name="Locali E.C."/>
            <person name="Machado M.A."/>
            <person name="Madeira A.M.B.N."/>
            <person name="Martinez-Rossi N.M."/>
            <person name="Martins E.C."/>
            <person name="Meidanis J."/>
            <person name="Menck C.F.M."/>
            <person name="Miyaki C.Y."/>
            <person name="Moon D.H."/>
            <person name="Moreira L.M."/>
            <person name="Novo M.T.M."/>
            <person name="Okura V.K."/>
            <person name="Oliveira M.C."/>
            <person name="Oliveira V.R."/>
            <person name="Pereira H.A."/>
            <person name="Rossi A."/>
            <person name="Sena J.A.D."/>
            <person name="Silva C."/>
            <person name="de Souza R.F."/>
            <person name="Spinola L.A.F."/>
            <person name="Takita M.A."/>
            <person name="Tamura R.E."/>
            <person name="Teixeira E.C."/>
            <person name="Tezza R.I.D."/>
            <person name="Trindade dos Santos M."/>
            <person name="Truffi D."/>
            <person name="Tsai S.M."/>
            <person name="White F.F."/>
            <person name="Setubal J.C."/>
            <person name="Kitajima J.P."/>
        </authorList>
    </citation>
    <scope>NUCLEOTIDE SEQUENCE [LARGE SCALE GENOMIC DNA]</scope>
    <source>
        <strain>ATCC 33913 / DSM 3586 / NCPPB 528 / LMG 568 / P 25</strain>
    </source>
</reference>
<organism>
    <name type="scientific">Xanthomonas campestris pv. campestris (strain ATCC 33913 / DSM 3586 / NCPPB 528 / LMG 568 / P 25)</name>
    <dbReference type="NCBI Taxonomy" id="190485"/>
    <lineage>
        <taxon>Bacteria</taxon>
        <taxon>Pseudomonadati</taxon>
        <taxon>Pseudomonadota</taxon>
        <taxon>Gammaproteobacteria</taxon>
        <taxon>Lysobacterales</taxon>
        <taxon>Lysobacteraceae</taxon>
        <taxon>Xanthomonas</taxon>
    </lineage>
</organism>
<evidence type="ECO:0000250" key="1"/>
<evidence type="ECO:0000255" key="2"/>
<evidence type="ECO:0000305" key="3"/>
<dbReference type="EMBL" id="AE008922">
    <property type="protein sequence ID" value="AAM39329.1"/>
    <property type="molecule type" value="Genomic_DNA"/>
</dbReference>
<dbReference type="RefSeq" id="NP_635405.1">
    <property type="nucleotide sequence ID" value="NC_003902.1"/>
</dbReference>
<dbReference type="RefSeq" id="WP_011035268.1">
    <property type="nucleotide sequence ID" value="NC_003902.1"/>
</dbReference>
<dbReference type="SMR" id="P0C7M0"/>
<dbReference type="STRING" id="190485.XCC0010"/>
<dbReference type="EnsemblBacteria" id="AAM39329">
    <property type="protein sequence ID" value="AAM39329"/>
    <property type="gene ID" value="XCC0010"/>
</dbReference>
<dbReference type="KEGG" id="xcc:XCC0010"/>
<dbReference type="PATRIC" id="fig|190485.4.peg.10"/>
<dbReference type="eggNOG" id="COG0848">
    <property type="taxonomic scope" value="Bacteria"/>
</dbReference>
<dbReference type="HOGENOM" id="CLU_085305_1_1_6"/>
<dbReference type="OrthoDB" id="9798629at2"/>
<dbReference type="Proteomes" id="UP000001010">
    <property type="component" value="Chromosome"/>
</dbReference>
<dbReference type="GO" id="GO:0005886">
    <property type="term" value="C:plasma membrane"/>
    <property type="evidence" value="ECO:0000318"/>
    <property type="project" value="GO_Central"/>
</dbReference>
<dbReference type="GO" id="GO:0022857">
    <property type="term" value="F:transmembrane transporter activity"/>
    <property type="evidence" value="ECO:0007669"/>
    <property type="project" value="InterPro"/>
</dbReference>
<dbReference type="GO" id="GO:0015031">
    <property type="term" value="P:protein transport"/>
    <property type="evidence" value="ECO:0007669"/>
    <property type="project" value="UniProtKB-KW"/>
</dbReference>
<dbReference type="FunFam" id="3.30.420.270:FF:000006">
    <property type="entry name" value="Biopolymer transporter ExbD"/>
    <property type="match status" value="1"/>
</dbReference>
<dbReference type="Gene3D" id="3.30.420.270">
    <property type="match status" value="1"/>
</dbReference>
<dbReference type="InterPro" id="IPR003400">
    <property type="entry name" value="ExbD"/>
</dbReference>
<dbReference type="PANTHER" id="PTHR30558:SF12">
    <property type="entry name" value="BIOPOLYMER TRANSPORT PROTEIN EXBD"/>
    <property type="match status" value="1"/>
</dbReference>
<dbReference type="PANTHER" id="PTHR30558">
    <property type="entry name" value="EXBD MEMBRANE COMPONENT OF PMF-DRIVEN MACROMOLECULE IMPORT SYSTEM"/>
    <property type="match status" value="1"/>
</dbReference>
<dbReference type="Pfam" id="PF02472">
    <property type="entry name" value="ExbD"/>
    <property type="match status" value="1"/>
</dbReference>
<keyword id="KW-0997">Cell inner membrane</keyword>
<keyword id="KW-1003">Cell membrane</keyword>
<keyword id="KW-0472">Membrane</keyword>
<keyword id="KW-0653">Protein transport</keyword>
<keyword id="KW-1185">Reference proteome</keyword>
<keyword id="KW-0812">Transmembrane</keyword>
<keyword id="KW-1133">Transmembrane helix</keyword>
<keyword id="KW-0813">Transport</keyword>
<proteinExistence type="inferred from homology"/>
<protein>
    <recommendedName>
        <fullName>Biopolymer transport protein exbD1</fullName>
    </recommendedName>
</protein>